<feature type="signal peptide" evidence="4">
    <location>
        <begin position="1"/>
        <end position="11"/>
    </location>
</feature>
<feature type="chain" id="PRO_0000461986" description="Equinin B" evidence="1">
    <location>
        <begin position="12"/>
        <end position="45"/>
    </location>
</feature>
<feature type="propeptide" id="PRO_0000461987" evidence="4">
    <location>
        <begin position="46"/>
        <end position="71"/>
    </location>
</feature>
<keyword id="KW-0044">Antibiotic</keyword>
<keyword id="KW-0929">Antimicrobial</keyword>
<keyword id="KW-0903">Direct protein sequencing</keyword>
<keyword id="KW-1015">Disulfide bond</keyword>
<keyword id="KW-0391">Immunity</keyword>
<keyword id="KW-0399">Innate immunity</keyword>
<keyword id="KW-0472">Membrane</keyword>
<keyword id="KW-0964">Secreted</keyword>
<keyword id="KW-0732">Signal</keyword>
<keyword id="KW-1052">Target cell membrane</keyword>
<keyword id="KW-1053">Target membrane</keyword>
<organism>
    <name type="scientific">Actinia equina</name>
    <name type="common">Beadlet anemone</name>
    <dbReference type="NCBI Taxonomy" id="6106"/>
    <lineage>
        <taxon>Eukaryota</taxon>
        <taxon>Metazoa</taxon>
        <taxon>Cnidaria</taxon>
        <taxon>Anthozoa</taxon>
        <taxon>Hexacorallia</taxon>
        <taxon>Actiniaria</taxon>
        <taxon>Actiniidae</taxon>
        <taxon>Actinia</taxon>
    </lineage>
</organism>
<sequence length="71" mass="8119">MAVIMVDQAEGGQCQRKCLGHCSKKCPKHPQCRKRCIRRCFGYCLGDEPQQMALDDESDPLVILPNNYNDY</sequence>
<comment type="function">
    <text evidence="1">Antimicrobial peptide with inhibitory activity against both Gram-positive and Gram-negative bacteria (E.coli (MIC=0.25 ug/ml), M.lysodeikticus (MIC=0.25 ug/ml), and V.alginolyticus (MIC=0.25 ug/ml)). Does not show hemolytic activity.</text>
</comment>
<comment type="subcellular location">
    <subcellularLocation>
        <location evidence="1">Secreted</location>
    </subcellularLocation>
    <subcellularLocation>
        <location evidence="3">Target cell membrane</location>
    </subcellularLocation>
</comment>
<comment type="PTM">
    <text evidence="3">Contains 4 disulfide bonds.</text>
</comment>
<reference key="1">
    <citation type="journal article" date="2024" name="Mar. Drugs">
        <title>Equinins as novel broad-spectrum antimicrobial peptides isolated from the cnidarian Actinia equina (Linnaeus, 1758).</title>
        <authorList>
            <person name="La Corte C."/>
            <person name="Catania V."/>
            <person name="Dara M."/>
            <person name="Parrinello D."/>
            <person name="Staropoli M."/>
            <person name="Trapani M.R."/>
            <person name="Cammarata M."/>
            <person name="Parisi M.G."/>
        </authorList>
    </citation>
    <scope>NUCLEOTIDE SEQUENCE [MRNA]</scope>
    <scope>PROTEIN SEQUENCE OF 12-45</scope>
    <scope>FUNCTION</scope>
    <scope>SUBCELLULAR LOCATION</scope>
    <scope>SYNTHESIS OF 12-45</scope>
    <scope>3D-STRUCTURE MODELING</scope>
    <source>
        <tissue>Tentacle</tissue>
    </source>
</reference>
<name>EQB_ACTEQ</name>
<evidence type="ECO:0000269" key="1">
    <source>
    </source>
</evidence>
<evidence type="ECO:0000303" key="2">
    <source>
    </source>
</evidence>
<evidence type="ECO:0000305" key="3"/>
<evidence type="ECO:0000305" key="4">
    <source>
    </source>
</evidence>
<protein>
    <recommendedName>
        <fullName evidence="2">Equinin B</fullName>
    </recommendedName>
</protein>
<accession>P0DY21</accession>
<proteinExistence type="evidence at protein level"/>